<protein>
    <recommendedName>
        <fullName>N-carbamoylputrescine amidase</fullName>
        <ecNumber>3.5.1.53</ecNumber>
    </recommendedName>
</protein>
<gene>
    <name type="primary">CPA</name>
</gene>
<dbReference type="EC" id="3.5.1.53"/>
<dbReference type="EMBL" id="DQ191642">
    <property type="protein sequence ID" value="ABA40443.1"/>
    <property type="molecule type" value="mRNA"/>
</dbReference>
<dbReference type="RefSeq" id="NP_001275125.1">
    <property type="nucleotide sequence ID" value="NM_001288196.1"/>
</dbReference>
<dbReference type="SMR" id="Q3HVN1"/>
<dbReference type="FunCoup" id="Q3HVN1">
    <property type="interactions" value="352"/>
</dbReference>
<dbReference type="STRING" id="4113.Q3HVN1"/>
<dbReference type="PaxDb" id="4113-PGSC0003DMT400067716"/>
<dbReference type="GeneID" id="102600318"/>
<dbReference type="KEGG" id="sot:102600318"/>
<dbReference type="eggNOG" id="KOG0806">
    <property type="taxonomic scope" value="Eukaryota"/>
</dbReference>
<dbReference type="InParanoid" id="Q3HVN1"/>
<dbReference type="OrthoDB" id="412018at2759"/>
<dbReference type="UniPathway" id="UPA00534">
    <property type="reaction ID" value="UER00286"/>
</dbReference>
<dbReference type="Proteomes" id="UP000011115">
    <property type="component" value="Unassembled WGS sequence"/>
</dbReference>
<dbReference type="ExpressionAtlas" id="Q3HVN1">
    <property type="expression patterns" value="baseline"/>
</dbReference>
<dbReference type="GO" id="GO:0050126">
    <property type="term" value="F:N-carbamoylputrescine amidase activity"/>
    <property type="evidence" value="ECO:0000318"/>
    <property type="project" value="GO_Central"/>
</dbReference>
<dbReference type="GO" id="GO:0033388">
    <property type="term" value="P:putrescine biosynthetic process from arginine"/>
    <property type="evidence" value="ECO:0000318"/>
    <property type="project" value="GO_Central"/>
</dbReference>
<dbReference type="CDD" id="cd07573">
    <property type="entry name" value="CPA"/>
    <property type="match status" value="1"/>
</dbReference>
<dbReference type="FunFam" id="3.60.110.10:FF:000012">
    <property type="entry name" value="N-carbamoylputrescine amidohydrolase, putative"/>
    <property type="match status" value="1"/>
</dbReference>
<dbReference type="Gene3D" id="3.60.110.10">
    <property type="entry name" value="Carbon-nitrogen hydrolase"/>
    <property type="match status" value="1"/>
</dbReference>
<dbReference type="InterPro" id="IPR050345">
    <property type="entry name" value="Aliph_Amidase/BUP"/>
</dbReference>
<dbReference type="InterPro" id="IPR003010">
    <property type="entry name" value="C-N_Hydrolase"/>
</dbReference>
<dbReference type="InterPro" id="IPR036526">
    <property type="entry name" value="C-N_Hydrolase_sf"/>
</dbReference>
<dbReference type="InterPro" id="IPR017755">
    <property type="entry name" value="N-carbamoylputrescine_amidase"/>
</dbReference>
<dbReference type="NCBIfam" id="TIGR03381">
    <property type="entry name" value="agmatine_aguB"/>
    <property type="match status" value="1"/>
</dbReference>
<dbReference type="PANTHER" id="PTHR43674:SF2">
    <property type="entry name" value="BETA-UREIDOPROPIONASE"/>
    <property type="match status" value="1"/>
</dbReference>
<dbReference type="PANTHER" id="PTHR43674">
    <property type="entry name" value="NITRILASE C965.09-RELATED"/>
    <property type="match status" value="1"/>
</dbReference>
<dbReference type="Pfam" id="PF00795">
    <property type="entry name" value="CN_hydrolase"/>
    <property type="match status" value="1"/>
</dbReference>
<dbReference type="SUPFAM" id="SSF56317">
    <property type="entry name" value="Carbon-nitrogen hydrolase"/>
    <property type="match status" value="1"/>
</dbReference>
<dbReference type="PROSITE" id="PS50263">
    <property type="entry name" value="CN_HYDROLASE"/>
    <property type="match status" value="1"/>
</dbReference>
<accession>Q3HVN1</accession>
<comment type="function">
    <text evidence="1">Involved in polyamine biosynthesis.</text>
</comment>
<comment type="catalytic activity">
    <reaction>
        <text>N-carbamoylputrescine + H2O + 2 H(+) = putrescine + NH4(+) + CO2</text>
        <dbReference type="Rhea" id="RHEA:22284"/>
        <dbReference type="ChEBI" id="CHEBI:15377"/>
        <dbReference type="ChEBI" id="CHEBI:15378"/>
        <dbReference type="ChEBI" id="CHEBI:16526"/>
        <dbReference type="ChEBI" id="CHEBI:28938"/>
        <dbReference type="ChEBI" id="CHEBI:58318"/>
        <dbReference type="ChEBI" id="CHEBI:326268"/>
        <dbReference type="EC" id="3.5.1.53"/>
    </reaction>
</comment>
<comment type="pathway">
    <text>Amine and polyamine biosynthesis; putrescine biosynthesis via agmatine pathway; putrescine from N-carbamoylputrescine (amidase route): step 1/1.</text>
</comment>
<comment type="subunit">
    <text evidence="1">Homooctamer.</text>
</comment>
<comment type="similarity">
    <text evidence="3">Belongs to the carbon-nitrogen hydrolase superfamily.</text>
</comment>
<name>AGUB_SOLTU</name>
<evidence type="ECO:0000250" key="1"/>
<evidence type="ECO:0000255" key="2">
    <source>
        <dbReference type="PROSITE-ProRule" id="PRU00054"/>
    </source>
</evidence>
<evidence type="ECO:0000305" key="3"/>
<proteinExistence type="evidence at transcript level"/>
<organism>
    <name type="scientific">Solanum tuberosum</name>
    <name type="common">Potato</name>
    <dbReference type="NCBI Taxonomy" id="4113"/>
    <lineage>
        <taxon>Eukaryota</taxon>
        <taxon>Viridiplantae</taxon>
        <taxon>Streptophyta</taxon>
        <taxon>Embryophyta</taxon>
        <taxon>Tracheophyta</taxon>
        <taxon>Spermatophyta</taxon>
        <taxon>Magnoliopsida</taxon>
        <taxon>eudicotyledons</taxon>
        <taxon>Gunneridae</taxon>
        <taxon>Pentapetalae</taxon>
        <taxon>asterids</taxon>
        <taxon>lamiids</taxon>
        <taxon>Solanales</taxon>
        <taxon>Solanaceae</taxon>
        <taxon>Solanoideae</taxon>
        <taxon>Solaneae</taxon>
        <taxon>Solanum</taxon>
    </lineage>
</organism>
<sequence length="300" mass="33405">MAEKNRLVTVAALQFACTDDVSTNVATAERLVRAAHQKGANIILIQELFEGYYFCQAQKEEFFHRAKPYLGHPTIVRMQNLAKELGVVIPVSFFEEANNAHYNSVAIIDADGTDLGLYRKSHIPDGPGYQEKFYFNPGDTGFKVFQTKYAKIGVAICWDQWFPEAARAMALQGAEVLFYPTAIGSEPQDDGLDSRDHWRRVMQGHAGANVVPLVASNRIGKEIIETEHGNSEITFYGYSFIAGPTGELVAAAGDKEEAVLVAQFDLDKIKSKRHGWGVYRDRRPDLYKVLLTLDGSNPVK</sequence>
<keyword id="KW-0378">Hydrolase</keyword>
<keyword id="KW-0620">Polyamine biosynthesis</keyword>
<keyword id="KW-1185">Reference proteome</keyword>
<reference key="1">
    <citation type="submission" date="2005-09" db="EMBL/GenBank/DDBJ databases">
        <authorList>
            <person name="Nielsen K.L."/>
            <person name="Welinder K.G."/>
            <person name="Nielsen H.V."/>
            <person name="Emmersen J.M.G."/>
        </authorList>
    </citation>
    <scope>NUCLEOTIDE SEQUENCE [MRNA]</scope>
    <source>
        <strain>cv. Kuras</strain>
        <tissue>Tuber</tissue>
    </source>
</reference>
<feature type="chain" id="PRO_0000261604" description="N-carbamoylputrescine amidase">
    <location>
        <begin position="1"/>
        <end position="300"/>
    </location>
</feature>
<feature type="domain" description="CN hydrolase" evidence="2">
    <location>
        <begin position="8"/>
        <end position="266"/>
    </location>
</feature>
<feature type="active site" description="Proton acceptor" evidence="2">
    <location>
        <position position="47"/>
    </location>
</feature>
<feature type="active site" description="Proton donor" evidence="2">
    <location>
        <position position="120"/>
    </location>
</feature>
<feature type="active site" description="Nucleophile" evidence="2">
    <location>
        <position position="157"/>
    </location>
</feature>